<evidence type="ECO:0000255" key="1">
    <source>
        <dbReference type="HAMAP-Rule" id="MF_00508"/>
    </source>
</evidence>
<evidence type="ECO:0000305" key="2"/>
<dbReference type="EMBL" id="CP000227">
    <property type="protein sequence ID" value="ACM10637.1"/>
    <property type="molecule type" value="Genomic_DNA"/>
</dbReference>
<dbReference type="SMR" id="B9IZJ3"/>
<dbReference type="KEGG" id="bcq:BCQ_0122"/>
<dbReference type="HOGENOM" id="CLU_122625_1_3_9"/>
<dbReference type="Proteomes" id="UP000000441">
    <property type="component" value="Chromosome"/>
</dbReference>
<dbReference type="GO" id="GO:1990904">
    <property type="term" value="C:ribonucleoprotein complex"/>
    <property type="evidence" value="ECO:0007669"/>
    <property type="project" value="UniProtKB-KW"/>
</dbReference>
<dbReference type="GO" id="GO:0005840">
    <property type="term" value="C:ribosome"/>
    <property type="evidence" value="ECO:0007669"/>
    <property type="project" value="UniProtKB-KW"/>
</dbReference>
<dbReference type="GO" id="GO:0003735">
    <property type="term" value="F:structural constituent of ribosome"/>
    <property type="evidence" value="ECO:0007669"/>
    <property type="project" value="InterPro"/>
</dbReference>
<dbReference type="GO" id="GO:0000049">
    <property type="term" value="F:tRNA binding"/>
    <property type="evidence" value="ECO:0007669"/>
    <property type="project" value="UniProtKB-UniRule"/>
</dbReference>
<dbReference type="GO" id="GO:0006412">
    <property type="term" value="P:translation"/>
    <property type="evidence" value="ECO:0007669"/>
    <property type="project" value="UniProtKB-UniRule"/>
</dbReference>
<dbReference type="FunFam" id="3.30.70.600:FF:000001">
    <property type="entry name" value="30S ribosomal protein S10"/>
    <property type="match status" value="1"/>
</dbReference>
<dbReference type="Gene3D" id="3.30.70.600">
    <property type="entry name" value="Ribosomal protein S10 domain"/>
    <property type="match status" value="1"/>
</dbReference>
<dbReference type="HAMAP" id="MF_00508">
    <property type="entry name" value="Ribosomal_uS10"/>
    <property type="match status" value="1"/>
</dbReference>
<dbReference type="InterPro" id="IPR001848">
    <property type="entry name" value="Ribosomal_uS10"/>
</dbReference>
<dbReference type="InterPro" id="IPR018268">
    <property type="entry name" value="Ribosomal_uS10_CS"/>
</dbReference>
<dbReference type="InterPro" id="IPR027486">
    <property type="entry name" value="Ribosomal_uS10_dom"/>
</dbReference>
<dbReference type="InterPro" id="IPR036838">
    <property type="entry name" value="Ribosomal_uS10_dom_sf"/>
</dbReference>
<dbReference type="NCBIfam" id="NF001861">
    <property type="entry name" value="PRK00596.1"/>
    <property type="match status" value="1"/>
</dbReference>
<dbReference type="NCBIfam" id="TIGR01049">
    <property type="entry name" value="rpsJ_bact"/>
    <property type="match status" value="1"/>
</dbReference>
<dbReference type="PANTHER" id="PTHR11700">
    <property type="entry name" value="30S RIBOSOMAL PROTEIN S10 FAMILY MEMBER"/>
    <property type="match status" value="1"/>
</dbReference>
<dbReference type="Pfam" id="PF00338">
    <property type="entry name" value="Ribosomal_S10"/>
    <property type="match status" value="1"/>
</dbReference>
<dbReference type="PRINTS" id="PR00971">
    <property type="entry name" value="RIBOSOMALS10"/>
</dbReference>
<dbReference type="SMART" id="SM01403">
    <property type="entry name" value="Ribosomal_S10"/>
    <property type="match status" value="1"/>
</dbReference>
<dbReference type="SUPFAM" id="SSF54999">
    <property type="entry name" value="Ribosomal protein S10"/>
    <property type="match status" value="1"/>
</dbReference>
<dbReference type="PROSITE" id="PS00361">
    <property type="entry name" value="RIBOSOMAL_S10"/>
    <property type="match status" value="1"/>
</dbReference>
<organism>
    <name type="scientific">Bacillus cereus (strain Q1)</name>
    <dbReference type="NCBI Taxonomy" id="361100"/>
    <lineage>
        <taxon>Bacteria</taxon>
        <taxon>Bacillati</taxon>
        <taxon>Bacillota</taxon>
        <taxon>Bacilli</taxon>
        <taxon>Bacillales</taxon>
        <taxon>Bacillaceae</taxon>
        <taxon>Bacillus</taxon>
        <taxon>Bacillus cereus group</taxon>
    </lineage>
</organism>
<sequence length="102" mass="11684">MAKEKIRIRLKAYDHRILDQSAEKIVETAKRSGATVSGPIPLPTEKTVYTILRAVHKYKDSREQFEMRTHKRLIDIVSPTPQTVDSLMRLDLPSGVDIEIKL</sequence>
<gene>
    <name evidence="1" type="primary">rpsJ</name>
    <name type="ordered locus">BCQ_0122</name>
</gene>
<accession>B9IZJ3</accession>
<name>RS10_BACCQ</name>
<protein>
    <recommendedName>
        <fullName evidence="1">Small ribosomal subunit protein uS10</fullName>
    </recommendedName>
    <alternativeName>
        <fullName evidence="2">30S ribosomal protein S10</fullName>
    </alternativeName>
</protein>
<proteinExistence type="inferred from homology"/>
<feature type="chain" id="PRO_1000196286" description="Small ribosomal subunit protein uS10">
    <location>
        <begin position="1"/>
        <end position="102"/>
    </location>
</feature>
<comment type="function">
    <text evidence="1">Involved in the binding of tRNA to the ribosomes.</text>
</comment>
<comment type="subunit">
    <text evidence="1">Part of the 30S ribosomal subunit.</text>
</comment>
<comment type="similarity">
    <text evidence="1">Belongs to the universal ribosomal protein uS10 family.</text>
</comment>
<keyword id="KW-0687">Ribonucleoprotein</keyword>
<keyword id="KW-0689">Ribosomal protein</keyword>
<reference key="1">
    <citation type="journal article" date="2009" name="J. Bacteriol.">
        <title>Complete genome sequence of the extremophilic Bacillus cereus strain Q1 with industrial applications.</title>
        <authorList>
            <person name="Xiong Z."/>
            <person name="Jiang Y."/>
            <person name="Qi D."/>
            <person name="Lu H."/>
            <person name="Yang F."/>
            <person name="Yang J."/>
            <person name="Chen L."/>
            <person name="Sun L."/>
            <person name="Xu X."/>
            <person name="Xue Y."/>
            <person name="Zhu Y."/>
            <person name="Jin Q."/>
        </authorList>
    </citation>
    <scope>NUCLEOTIDE SEQUENCE [LARGE SCALE GENOMIC DNA]</scope>
    <source>
        <strain>Q1</strain>
    </source>
</reference>